<keyword id="KW-0963">Cytoplasm</keyword>
<keyword id="KW-0312">Gluconeogenesis</keyword>
<keyword id="KW-0324">Glycolysis</keyword>
<keyword id="KW-0413">Isomerase</keyword>
<keyword id="KW-1185">Reference proteome</keyword>
<proteinExistence type="inferred from homology"/>
<name>TPIS_RUEPO</name>
<comment type="function">
    <text evidence="1">Involved in the gluconeogenesis. Catalyzes stereospecifically the conversion of dihydroxyacetone phosphate (DHAP) to D-glyceraldehyde-3-phosphate (G3P).</text>
</comment>
<comment type="catalytic activity">
    <reaction evidence="1">
        <text>D-glyceraldehyde 3-phosphate = dihydroxyacetone phosphate</text>
        <dbReference type="Rhea" id="RHEA:18585"/>
        <dbReference type="ChEBI" id="CHEBI:57642"/>
        <dbReference type="ChEBI" id="CHEBI:59776"/>
        <dbReference type="EC" id="5.3.1.1"/>
    </reaction>
</comment>
<comment type="pathway">
    <text evidence="1">Carbohydrate biosynthesis; gluconeogenesis.</text>
</comment>
<comment type="pathway">
    <text evidence="1">Carbohydrate degradation; glycolysis; D-glyceraldehyde 3-phosphate from glycerone phosphate: step 1/1.</text>
</comment>
<comment type="subunit">
    <text evidence="1">Homodimer.</text>
</comment>
<comment type="subcellular location">
    <subcellularLocation>
        <location evidence="1">Cytoplasm</location>
    </subcellularLocation>
</comment>
<comment type="similarity">
    <text evidence="1">Belongs to the triosephosphate isomerase family.</text>
</comment>
<protein>
    <recommendedName>
        <fullName evidence="1">Triosephosphate isomerase</fullName>
        <shortName evidence="1">TIM</shortName>
        <shortName evidence="1">TPI</shortName>
        <ecNumber evidence="1">5.3.1.1</ecNumber>
    </recommendedName>
    <alternativeName>
        <fullName evidence="1">Triose-phosphate isomerase</fullName>
    </alternativeName>
</protein>
<gene>
    <name evidence="1" type="primary">tpiA</name>
    <name type="ordered locus">SPO2621</name>
</gene>
<evidence type="ECO:0000255" key="1">
    <source>
        <dbReference type="HAMAP-Rule" id="MF_00147"/>
    </source>
</evidence>
<organism>
    <name type="scientific">Ruegeria pomeroyi (strain ATCC 700808 / DSM 15171 / DSS-3)</name>
    <name type="common">Silicibacter pomeroyi</name>
    <dbReference type="NCBI Taxonomy" id="246200"/>
    <lineage>
        <taxon>Bacteria</taxon>
        <taxon>Pseudomonadati</taxon>
        <taxon>Pseudomonadota</taxon>
        <taxon>Alphaproteobacteria</taxon>
        <taxon>Rhodobacterales</taxon>
        <taxon>Roseobacteraceae</taxon>
        <taxon>Ruegeria</taxon>
    </lineage>
</organism>
<feature type="chain" id="PRO_1000058119" description="Triosephosphate isomerase">
    <location>
        <begin position="1"/>
        <end position="251"/>
    </location>
</feature>
<feature type="active site" description="Electrophile" evidence="1">
    <location>
        <position position="93"/>
    </location>
</feature>
<feature type="active site" description="Proton acceptor" evidence="1">
    <location>
        <position position="163"/>
    </location>
</feature>
<feature type="binding site" evidence="1">
    <location>
        <begin position="9"/>
        <end position="11"/>
    </location>
    <ligand>
        <name>substrate</name>
    </ligand>
</feature>
<feature type="binding site" evidence="1">
    <location>
        <position position="169"/>
    </location>
    <ligand>
        <name>substrate</name>
    </ligand>
</feature>
<feature type="binding site" evidence="1">
    <location>
        <position position="209"/>
    </location>
    <ligand>
        <name>substrate</name>
    </ligand>
</feature>
<feature type="binding site" evidence="1">
    <location>
        <begin position="230"/>
        <end position="231"/>
    </location>
    <ligand>
        <name>substrate</name>
    </ligand>
</feature>
<dbReference type="EC" id="5.3.1.1" evidence="1"/>
<dbReference type="EMBL" id="CP000031">
    <property type="protein sequence ID" value="AAV95866.1"/>
    <property type="molecule type" value="Genomic_DNA"/>
</dbReference>
<dbReference type="RefSeq" id="WP_011048323.1">
    <property type="nucleotide sequence ID" value="NC_003911.12"/>
</dbReference>
<dbReference type="SMR" id="Q5LQ75"/>
<dbReference type="STRING" id="246200.SPO2621"/>
<dbReference type="PaxDb" id="246200-SPO2621"/>
<dbReference type="KEGG" id="sil:SPO2621"/>
<dbReference type="eggNOG" id="COG0149">
    <property type="taxonomic scope" value="Bacteria"/>
</dbReference>
<dbReference type="HOGENOM" id="CLU_024251_2_1_5"/>
<dbReference type="OrthoDB" id="9809429at2"/>
<dbReference type="UniPathway" id="UPA00109">
    <property type="reaction ID" value="UER00189"/>
</dbReference>
<dbReference type="UniPathway" id="UPA00138"/>
<dbReference type="Proteomes" id="UP000001023">
    <property type="component" value="Chromosome"/>
</dbReference>
<dbReference type="GO" id="GO:0005829">
    <property type="term" value="C:cytosol"/>
    <property type="evidence" value="ECO:0007669"/>
    <property type="project" value="TreeGrafter"/>
</dbReference>
<dbReference type="GO" id="GO:0004807">
    <property type="term" value="F:triose-phosphate isomerase activity"/>
    <property type="evidence" value="ECO:0007669"/>
    <property type="project" value="UniProtKB-UniRule"/>
</dbReference>
<dbReference type="GO" id="GO:0006094">
    <property type="term" value="P:gluconeogenesis"/>
    <property type="evidence" value="ECO:0007669"/>
    <property type="project" value="UniProtKB-UniRule"/>
</dbReference>
<dbReference type="GO" id="GO:0046166">
    <property type="term" value="P:glyceraldehyde-3-phosphate biosynthetic process"/>
    <property type="evidence" value="ECO:0007669"/>
    <property type="project" value="TreeGrafter"/>
</dbReference>
<dbReference type="GO" id="GO:0019563">
    <property type="term" value="P:glycerol catabolic process"/>
    <property type="evidence" value="ECO:0007669"/>
    <property type="project" value="TreeGrafter"/>
</dbReference>
<dbReference type="GO" id="GO:0006096">
    <property type="term" value="P:glycolytic process"/>
    <property type="evidence" value="ECO:0007669"/>
    <property type="project" value="UniProtKB-UniRule"/>
</dbReference>
<dbReference type="CDD" id="cd00311">
    <property type="entry name" value="TIM"/>
    <property type="match status" value="1"/>
</dbReference>
<dbReference type="FunFam" id="3.20.20.70:FF:000016">
    <property type="entry name" value="Triosephosphate isomerase"/>
    <property type="match status" value="1"/>
</dbReference>
<dbReference type="Gene3D" id="3.20.20.70">
    <property type="entry name" value="Aldolase class I"/>
    <property type="match status" value="1"/>
</dbReference>
<dbReference type="HAMAP" id="MF_00147_B">
    <property type="entry name" value="TIM_B"/>
    <property type="match status" value="1"/>
</dbReference>
<dbReference type="InterPro" id="IPR013785">
    <property type="entry name" value="Aldolase_TIM"/>
</dbReference>
<dbReference type="InterPro" id="IPR035990">
    <property type="entry name" value="TIM_sf"/>
</dbReference>
<dbReference type="InterPro" id="IPR022896">
    <property type="entry name" value="TrioseP_Isoase_bac/euk"/>
</dbReference>
<dbReference type="InterPro" id="IPR000652">
    <property type="entry name" value="Triosephosphate_isomerase"/>
</dbReference>
<dbReference type="InterPro" id="IPR020861">
    <property type="entry name" value="Triosephosphate_isomerase_AS"/>
</dbReference>
<dbReference type="NCBIfam" id="TIGR00419">
    <property type="entry name" value="tim"/>
    <property type="match status" value="1"/>
</dbReference>
<dbReference type="PANTHER" id="PTHR21139">
    <property type="entry name" value="TRIOSEPHOSPHATE ISOMERASE"/>
    <property type="match status" value="1"/>
</dbReference>
<dbReference type="PANTHER" id="PTHR21139:SF42">
    <property type="entry name" value="TRIOSEPHOSPHATE ISOMERASE"/>
    <property type="match status" value="1"/>
</dbReference>
<dbReference type="Pfam" id="PF00121">
    <property type="entry name" value="TIM"/>
    <property type="match status" value="1"/>
</dbReference>
<dbReference type="SUPFAM" id="SSF51351">
    <property type="entry name" value="Triosephosphate isomerase (TIM)"/>
    <property type="match status" value="1"/>
</dbReference>
<dbReference type="PROSITE" id="PS00171">
    <property type="entry name" value="TIM_1"/>
    <property type="match status" value="1"/>
</dbReference>
<dbReference type="PROSITE" id="PS51440">
    <property type="entry name" value="TIM_2"/>
    <property type="match status" value="1"/>
</dbReference>
<accession>Q5LQ75</accession>
<sequence>MRRKLAAGNWKMNGTGAALDALEAIAGAHSAAAVDLLICPPATLLYRAAQVAEGSRVRIGGQDCHAVTAGAHTGDISAMMLADAGASAVILGHSERRADHGETDAQVCDKARAALEAGLIAIICIGETLAQREAGQTLDVVCAQLAGSVPDGIDGTRVVVAYEPVWAIGTGLVPTLEQIAEVHDTLRQQLIGRFGSETAEAIRLLYGGSVKPGNAAEIFAVSNVDGALVGGASLTAADFSPIVSALEQAAG</sequence>
<reference key="1">
    <citation type="journal article" date="2004" name="Nature">
        <title>Genome sequence of Silicibacter pomeroyi reveals adaptations to the marine environment.</title>
        <authorList>
            <person name="Moran M.A."/>
            <person name="Buchan A."/>
            <person name="Gonzalez J.M."/>
            <person name="Heidelberg J.F."/>
            <person name="Whitman W.B."/>
            <person name="Kiene R.P."/>
            <person name="Henriksen J.R."/>
            <person name="King G.M."/>
            <person name="Belas R."/>
            <person name="Fuqua C."/>
            <person name="Brinkac L.M."/>
            <person name="Lewis M."/>
            <person name="Johri S."/>
            <person name="Weaver B."/>
            <person name="Pai G."/>
            <person name="Eisen J.A."/>
            <person name="Rahe E."/>
            <person name="Sheldon W.M."/>
            <person name="Ye W."/>
            <person name="Miller T.R."/>
            <person name="Carlton J."/>
            <person name="Rasko D.A."/>
            <person name="Paulsen I.T."/>
            <person name="Ren Q."/>
            <person name="Daugherty S.C."/>
            <person name="DeBoy R.T."/>
            <person name="Dodson R.J."/>
            <person name="Durkin A.S."/>
            <person name="Madupu R."/>
            <person name="Nelson W.C."/>
            <person name="Sullivan S.A."/>
            <person name="Rosovitz M.J."/>
            <person name="Haft D.H."/>
            <person name="Selengut J."/>
            <person name="Ward N."/>
        </authorList>
    </citation>
    <scope>NUCLEOTIDE SEQUENCE [LARGE SCALE GENOMIC DNA]</scope>
    <source>
        <strain>ATCC 700808 / DSM 15171 / DSS-3</strain>
    </source>
</reference>
<reference key="2">
    <citation type="journal article" date="2014" name="Stand. Genomic Sci.">
        <title>An updated genome annotation for the model marine bacterium Ruegeria pomeroyi DSS-3.</title>
        <authorList>
            <person name="Rivers A.R."/>
            <person name="Smith C.B."/>
            <person name="Moran M.A."/>
        </authorList>
    </citation>
    <scope>GENOME REANNOTATION</scope>
    <source>
        <strain>ATCC 700808 / DSM 15171 / DSS-3</strain>
    </source>
</reference>